<name>GL_SUHVF</name>
<accession>P52511</accession>
<accession>Q69398</accession>
<proteinExistence type="evidence at protein level"/>
<keyword id="KW-1015">Disulfide bond</keyword>
<keyword id="KW-1169">Fusion of virus membrane with host cell membrane</keyword>
<keyword id="KW-1168">Fusion of virus membrane with host membrane</keyword>
<keyword id="KW-0325">Glycoprotein</keyword>
<keyword id="KW-1032">Host cell membrane</keyword>
<keyword id="KW-1040">Host Golgi apparatus</keyword>
<keyword id="KW-1043">Host membrane</keyword>
<keyword id="KW-0472">Membrane</keyword>
<keyword id="KW-0732">Signal</keyword>
<keyword id="KW-0261">Viral envelope protein</keyword>
<keyword id="KW-1162">Viral penetration into host cytoplasm</keyword>
<keyword id="KW-0946">Virion</keyword>
<keyword id="KW-1160">Virus entry into host cell</keyword>
<reference key="1">
    <citation type="journal article" date="1994" name="J. Virol.">
        <title>Identification and characterization of a novel structural glycoprotein in pseudorabies virus, gL.</title>
        <authorList>
            <person name="Klupp B.G."/>
            <person name="Baumeister J."/>
            <person name="Karger A."/>
            <person name="Visser N."/>
            <person name="Mettenleiter T.C."/>
        </authorList>
    </citation>
    <scope>NUCLEOTIDE SEQUENCE [GENOMIC DNA]</scope>
    <scope>GLYCOSYLATION</scope>
</reference>
<reference key="2">
    <citation type="journal article" date="1993" name="J. Virol.">
        <title>A 3' coterminal gene cluster in pseudorabies virus contains herpes simplex virus UL1, UL2, and UL3 gene homologs and a unique UL3.5 open reading frame.</title>
        <authorList>
            <person name="Dean H.J."/>
            <person name="Cheung A.K."/>
        </authorList>
    </citation>
    <scope>NUCLEOTIDE SEQUENCE [GENOMIC DNA]</scope>
</reference>
<gene>
    <name evidence="1" type="primary">gL</name>
    <name type="synonym">UL1</name>
</gene>
<feature type="signal peptide" evidence="1">
    <location>
        <begin position="1"/>
        <end position="16"/>
    </location>
</feature>
<feature type="chain" id="PRO_0000038275" description="Envelope glycoprotein L" evidence="1">
    <location>
        <begin position="17"/>
        <end position="156"/>
    </location>
</feature>
<feature type="domain" description="gL alphaherpesvirus-type" evidence="2">
    <location>
        <begin position="50"/>
        <end position="156"/>
    </location>
</feature>
<feature type="disulfide bond" evidence="2">
    <location>
        <begin position="71"/>
        <end position="95"/>
    </location>
</feature>
<comment type="function">
    <text evidence="1">The heterodimer glycoprotein H-glycoprotein L is required for the fusion of viral and plasma membranes leading to virus entry into the host cell. Acts as a functional inhibitor of gH and maintains gH in an inhibited form. Upon binding to host integrins, gL dissociates from gH leading to activation of the viral fusion glycoproteins gB and gH.</text>
</comment>
<comment type="subunit">
    <text evidence="1">Interacts with glycoprotein H (gH); this interaction is necessary for the correct processing and cell surface expression of gH. The heterodimer gH/gL seems to interact with gB trimers during fusion.</text>
</comment>
<comment type="subcellular location">
    <subcellularLocation>
        <location evidence="1">Virion membrane</location>
        <topology evidence="1">Peripheral membrane protein</topology>
        <orientation evidence="1">Extracellular side</orientation>
    </subcellularLocation>
    <subcellularLocation>
        <location evidence="1">Host cell membrane</location>
        <topology evidence="1">Peripheral membrane protein</topology>
        <orientation evidence="1">Extracellular side</orientation>
    </subcellularLocation>
    <subcellularLocation>
        <location evidence="1">Host Golgi apparatus</location>
        <location evidence="1">Host trans-Golgi network</location>
    </subcellularLocation>
    <text evidence="1">gL associates with the extravirion surface through its binding to gH. During virion morphogenesis, this protein probably accumulates in the host trans-Golgi where secondary envelopment occurs.</text>
</comment>
<comment type="PTM">
    <text evidence="3">O-glycosylated, and sialylated.</text>
</comment>
<comment type="similarity">
    <text evidence="2">Belongs to the herpesviridae glycoprotein L (gL) family. Alphaherpesvirinae gL subfamily.</text>
</comment>
<comment type="sequence caution" evidence="4">
    <conflict type="erroneous initiation">
        <sequence resource="EMBL-CDS" id="AAA16421"/>
    </conflict>
</comment>
<organism>
    <name type="scientific">Suid herpesvirus 1 (strain Indiana-Funkhauser / Becker)</name>
    <name type="common">SuHV-1</name>
    <name type="synonym">Pseudorabies virus (strain Indiana-Funkhauser / Becker)</name>
    <dbReference type="NCBI Taxonomy" id="31523"/>
    <lineage>
        <taxon>Viruses</taxon>
        <taxon>Duplodnaviria</taxon>
        <taxon>Heunggongvirae</taxon>
        <taxon>Peploviricota</taxon>
        <taxon>Herviviricetes</taxon>
        <taxon>Herpesvirales</taxon>
        <taxon>Orthoherpesviridae</taxon>
        <taxon>Alphaherpesvirinae</taxon>
        <taxon>Varicellovirus</taxon>
        <taxon>Varicellovirus suidalpha1</taxon>
        <taxon>Suid herpesvirus 1</taxon>
    </lineage>
</organism>
<dbReference type="EMBL" id="U02512">
    <property type="protein sequence ID" value="AAA18855.1"/>
    <property type="molecule type" value="Unassigned_DNA"/>
</dbReference>
<dbReference type="EMBL" id="L13855">
    <property type="protein sequence ID" value="AAA16421.1"/>
    <property type="status" value="ALT_INIT"/>
    <property type="molecule type" value="Unassigned_DNA"/>
</dbReference>
<dbReference type="SMR" id="P52511"/>
<dbReference type="GO" id="GO:0044177">
    <property type="term" value="C:host cell Golgi apparatus"/>
    <property type="evidence" value="ECO:0007669"/>
    <property type="project" value="UniProtKB-SubCell"/>
</dbReference>
<dbReference type="GO" id="GO:0020002">
    <property type="term" value="C:host cell plasma membrane"/>
    <property type="evidence" value="ECO:0007669"/>
    <property type="project" value="UniProtKB-SubCell"/>
</dbReference>
<dbReference type="GO" id="GO:0016020">
    <property type="term" value="C:membrane"/>
    <property type="evidence" value="ECO:0007669"/>
    <property type="project" value="UniProtKB-KW"/>
</dbReference>
<dbReference type="GO" id="GO:0019031">
    <property type="term" value="C:viral envelope"/>
    <property type="evidence" value="ECO:0007669"/>
    <property type="project" value="UniProtKB-KW"/>
</dbReference>
<dbReference type="GO" id="GO:0055036">
    <property type="term" value="C:virion membrane"/>
    <property type="evidence" value="ECO:0007669"/>
    <property type="project" value="UniProtKB-SubCell"/>
</dbReference>
<dbReference type="GO" id="GO:0019064">
    <property type="term" value="P:fusion of virus membrane with host plasma membrane"/>
    <property type="evidence" value="ECO:0007669"/>
    <property type="project" value="UniProtKB-KW"/>
</dbReference>
<dbReference type="GO" id="GO:0046718">
    <property type="term" value="P:symbiont entry into host cell"/>
    <property type="evidence" value="ECO:0007669"/>
    <property type="project" value="UniProtKB-KW"/>
</dbReference>
<dbReference type="Gene3D" id="3.30.390.170">
    <property type="match status" value="1"/>
</dbReference>
<dbReference type="HAMAP" id="MF_04034">
    <property type="entry name" value="HSV_GL_alphagamma"/>
    <property type="match status" value="1"/>
</dbReference>
<dbReference type="InterPro" id="IPR007923">
    <property type="entry name" value="Herpes_gL_N"/>
</dbReference>
<dbReference type="InterPro" id="IPR038311">
    <property type="entry name" value="Herpes_gL_N_sf"/>
</dbReference>
<dbReference type="InterPro" id="IPR034708">
    <property type="entry name" value="HSV_GL_alphagamma"/>
</dbReference>
<dbReference type="Pfam" id="PF05259">
    <property type="entry name" value="Herpes_UL1"/>
    <property type="match status" value="1"/>
</dbReference>
<dbReference type="PROSITE" id="PS52024">
    <property type="entry name" value="GL_AHV"/>
    <property type="match status" value="1"/>
</dbReference>
<protein>
    <recommendedName>
        <fullName evidence="1">Envelope glycoprotein L</fullName>
        <shortName evidence="1">gL</shortName>
    </recommendedName>
</protein>
<evidence type="ECO:0000255" key="1">
    <source>
        <dbReference type="HAMAP-Rule" id="MF_04034"/>
    </source>
</evidence>
<evidence type="ECO:0000255" key="2">
    <source>
        <dbReference type="PROSITE-ProRule" id="PRU01368"/>
    </source>
</evidence>
<evidence type="ECO:0000269" key="3">
    <source>
    </source>
</evidence>
<evidence type="ECO:0000305" key="4"/>
<organismHost>
    <name type="scientific">Sus scrofa</name>
    <name type="common">Pig</name>
    <dbReference type="NCBI Taxonomy" id="9823"/>
</organismHost>
<sequence>MSPLVAVLVFFSAALGVPGPGVAGNPRGLDAIFEAPVTPAPPTRHPRREELEWDDEDHPLLDLEPPVGSRCHPYIAYSLPPDMNAVTSVVVKPYCSPPEVILWASGTAYLVNPFVAIQALAVGEPLNEAALKELGEVAVHKDSLPPLRYNGGPPAE</sequence>